<keyword id="KW-0413">Isomerase</keyword>
<keyword id="KW-1185">Reference proteome</keyword>
<keyword id="KW-0819">tRNA processing</keyword>
<evidence type="ECO:0000255" key="1">
    <source>
        <dbReference type="HAMAP-Rule" id="MF_01081"/>
    </source>
</evidence>
<reference key="1">
    <citation type="journal article" date="2008" name="Proc. Natl. Acad. Sci. U.S.A.">
        <title>A korarchaeal genome reveals new insights into the evolution of the Archaea.</title>
        <authorList>
            <person name="Elkins J.G."/>
            <person name="Podar M."/>
            <person name="Graham D.E."/>
            <person name="Makarova K.S."/>
            <person name="Wolf Y."/>
            <person name="Randau L."/>
            <person name="Hedlund B.P."/>
            <person name="Brochier-Armanet C."/>
            <person name="Kunin V."/>
            <person name="Anderson I."/>
            <person name="Lapidus A."/>
            <person name="Goltsman E."/>
            <person name="Barry K."/>
            <person name="Koonin E.V."/>
            <person name="Hugenholtz P."/>
            <person name="Kyrpides N."/>
            <person name="Wanner G."/>
            <person name="Richardson P."/>
            <person name="Keller M."/>
            <person name="Stetter K.O."/>
        </authorList>
    </citation>
    <scope>NUCLEOTIDE SEQUENCE [LARGE SCALE GENOMIC DNA]</scope>
    <source>
        <strain>OPF8</strain>
    </source>
</reference>
<accession>B1L793</accession>
<gene>
    <name evidence="1" type="primary">truB</name>
    <name type="ordered locus">Kcr_1577</name>
</gene>
<dbReference type="EC" id="5.4.99.25" evidence="1"/>
<dbReference type="EMBL" id="CP000968">
    <property type="protein sequence ID" value="ACB08322.1"/>
    <property type="molecule type" value="Genomic_DNA"/>
</dbReference>
<dbReference type="RefSeq" id="WP_012310219.1">
    <property type="nucleotide sequence ID" value="NC_010482.1"/>
</dbReference>
<dbReference type="SMR" id="B1L793"/>
<dbReference type="FunCoup" id="B1L793">
    <property type="interactions" value="103"/>
</dbReference>
<dbReference type="STRING" id="374847.Kcr_1577"/>
<dbReference type="EnsemblBacteria" id="ACB08322">
    <property type="protein sequence ID" value="ACB08322"/>
    <property type="gene ID" value="Kcr_1577"/>
</dbReference>
<dbReference type="GeneID" id="6094853"/>
<dbReference type="KEGG" id="kcr:Kcr_1577"/>
<dbReference type="eggNOG" id="arCOG00987">
    <property type="taxonomic scope" value="Archaea"/>
</dbReference>
<dbReference type="HOGENOM" id="CLU_032087_3_0_2"/>
<dbReference type="InParanoid" id="B1L793"/>
<dbReference type="OrthoDB" id="35866at2157"/>
<dbReference type="PhylomeDB" id="B1L793"/>
<dbReference type="Proteomes" id="UP000001686">
    <property type="component" value="Chromosome"/>
</dbReference>
<dbReference type="GO" id="GO:0009982">
    <property type="term" value="F:pseudouridine synthase activity"/>
    <property type="evidence" value="ECO:0000318"/>
    <property type="project" value="GO_Central"/>
</dbReference>
<dbReference type="GO" id="GO:0003723">
    <property type="term" value="F:RNA binding"/>
    <property type="evidence" value="ECO:0007669"/>
    <property type="project" value="InterPro"/>
</dbReference>
<dbReference type="GO" id="GO:0160148">
    <property type="term" value="F:tRNA pseudouridine(55) synthase activity"/>
    <property type="evidence" value="ECO:0007669"/>
    <property type="project" value="UniProtKB-EC"/>
</dbReference>
<dbReference type="GO" id="GO:0000495">
    <property type="term" value="P:box H/ACA sno(s)RNA 3'-end processing"/>
    <property type="evidence" value="ECO:0000318"/>
    <property type="project" value="GO_Central"/>
</dbReference>
<dbReference type="GO" id="GO:1990481">
    <property type="term" value="P:mRNA pseudouridine synthesis"/>
    <property type="evidence" value="ECO:0000318"/>
    <property type="project" value="GO_Central"/>
</dbReference>
<dbReference type="GO" id="GO:0031118">
    <property type="term" value="P:rRNA pseudouridine synthesis"/>
    <property type="evidence" value="ECO:0000318"/>
    <property type="project" value="GO_Central"/>
</dbReference>
<dbReference type="GO" id="GO:0031120">
    <property type="term" value="P:snRNA pseudouridine synthesis"/>
    <property type="evidence" value="ECO:0000318"/>
    <property type="project" value="GO_Central"/>
</dbReference>
<dbReference type="GO" id="GO:0031119">
    <property type="term" value="P:tRNA pseudouridine synthesis"/>
    <property type="evidence" value="ECO:0007669"/>
    <property type="project" value="UniProtKB-UniRule"/>
</dbReference>
<dbReference type="CDD" id="cd21148">
    <property type="entry name" value="PUA_Cbf5"/>
    <property type="match status" value="1"/>
</dbReference>
<dbReference type="FunFam" id="3.30.2350.10:FF:000001">
    <property type="entry name" value="H/ACA ribonucleoprotein complex subunit CBF5"/>
    <property type="match status" value="1"/>
</dbReference>
<dbReference type="Gene3D" id="3.30.2350.10">
    <property type="entry name" value="Pseudouridine synthase"/>
    <property type="match status" value="1"/>
</dbReference>
<dbReference type="Gene3D" id="2.30.130.10">
    <property type="entry name" value="PUA domain"/>
    <property type="match status" value="1"/>
</dbReference>
<dbReference type="HAMAP" id="MF_01081">
    <property type="entry name" value="TruB_arch"/>
    <property type="match status" value="1"/>
</dbReference>
<dbReference type="InterPro" id="IPR012960">
    <property type="entry name" value="Dyskerin-like"/>
</dbReference>
<dbReference type="InterPro" id="IPR020103">
    <property type="entry name" value="PsdUridine_synth_cat_dom_sf"/>
</dbReference>
<dbReference type="InterPro" id="IPR002501">
    <property type="entry name" value="PsdUridine_synth_N"/>
</dbReference>
<dbReference type="InterPro" id="IPR002478">
    <property type="entry name" value="PUA"/>
</dbReference>
<dbReference type="InterPro" id="IPR015947">
    <property type="entry name" value="PUA-like_sf"/>
</dbReference>
<dbReference type="InterPro" id="IPR036974">
    <property type="entry name" value="PUA_sf"/>
</dbReference>
<dbReference type="InterPro" id="IPR004802">
    <property type="entry name" value="tRNA_PsdUridine_synth_B_fam"/>
</dbReference>
<dbReference type="InterPro" id="IPR026326">
    <property type="entry name" value="TruB_arch"/>
</dbReference>
<dbReference type="InterPro" id="IPR032819">
    <property type="entry name" value="TruB_C"/>
</dbReference>
<dbReference type="NCBIfam" id="TIGR00425">
    <property type="entry name" value="CBF5"/>
    <property type="match status" value="1"/>
</dbReference>
<dbReference type="NCBIfam" id="NF003280">
    <property type="entry name" value="PRK04270.1"/>
    <property type="match status" value="1"/>
</dbReference>
<dbReference type="PANTHER" id="PTHR23127">
    <property type="entry name" value="CENTROMERE/MICROTUBULE BINDING PROTEIN CBF5"/>
    <property type="match status" value="1"/>
</dbReference>
<dbReference type="PANTHER" id="PTHR23127:SF0">
    <property type="entry name" value="H_ACA RIBONUCLEOPROTEIN COMPLEX SUBUNIT DKC1"/>
    <property type="match status" value="1"/>
</dbReference>
<dbReference type="Pfam" id="PF08068">
    <property type="entry name" value="DKCLD"/>
    <property type="match status" value="1"/>
</dbReference>
<dbReference type="Pfam" id="PF01472">
    <property type="entry name" value="PUA"/>
    <property type="match status" value="1"/>
</dbReference>
<dbReference type="Pfam" id="PF16198">
    <property type="entry name" value="TruB_C_2"/>
    <property type="match status" value="1"/>
</dbReference>
<dbReference type="Pfam" id="PF01509">
    <property type="entry name" value="TruB_N"/>
    <property type="match status" value="1"/>
</dbReference>
<dbReference type="SMART" id="SM01136">
    <property type="entry name" value="DKCLD"/>
    <property type="match status" value="1"/>
</dbReference>
<dbReference type="SMART" id="SM00359">
    <property type="entry name" value="PUA"/>
    <property type="match status" value="1"/>
</dbReference>
<dbReference type="SUPFAM" id="SSF55120">
    <property type="entry name" value="Pseudouridine synthase"/>
    <property type="match status" value="1"/>
</dbReference>
<dbReference type="SUPFAM" id="SSF88697">
    <property type="entry name" value="PUA domain-like"/>
    <property type="match status" value="1"/>
</dbReference>
<dbReference type="PROSITE" id="PS50890">
    <property type="entry name" value="PUA"/>
    <property type="match status" value="1"/>
</dbReference>
<sequence length="325" mass="36249">MIDEVEEIAVKSAYEPGPYGYRPQERPIFLYLDHGLIILDKPKGPSSHEVTERVKRILEYPGKVGHCGTLDPKVSGVLPIVLGNATKLSKFISGYDKEYVGTLYLHGDVPIDELKGALDKFTGPIFQRPPVKSAVKRSLRVRRVYSIELLSSEGRFHKLRVRVESGTYIRKLFFDIGEFLGVGGSMRDLRRIRSGIFTEKDCVTLEDIKDAYDSWRESGDESKIRKVILPLEEAVRHLPKIYVKDSAVASLTHGASLKVKGICSLSRGIKKGSIVALMTLKGELIAIGRALMDFDEMLSADSGVAASIERVIMPRDLYPPMWKTG</sequence>
<organism>
    <name type="scientific">Korarchaeum cryptofilum (strain OPF8)</name>
    <dbReference type="NCBI Taxonomy" id="374847"/>
    <lineage>
        <taxon>Archaea</taxon>
        <taxon>Thermoproteota</taxon>
        <taxon>Candidatus Korarchaeia</taxon>
        <taxon>Candidatus Korarchaeales</taxon>
        <taxon>Candidatus Korarchaeaceae</taxon>
        <taxon>Candidatus Korarchaeum</taxon>
    </lineage>
</organism>
<name>TRUB_KORCO</name>
<protein>
    <recommendedName>
        <fullName evidence="1">Probable tRNA pseudouridine synthase B</fullName>
        <ecNumber evidence="1">5.4.99.25</ecNumber>
    </recommendedName>
    <alternativeName>
        <fullName evidence="1">tRNA pseudouridine(55) synthase</fullName>
        <shortName evidence="1">Psi55 synthase</shortName>
    </alternativeName>
    <alternativeName>
        <fullName evidence="1">tRNA pseudouridylate synthase</fullName>
    </alternativeName>
    <alternativeName>
        <fullName evidence="1">tRNA-uridine isomerase</fullName>
    </alternativeName>
</protein>
<comment type="function">
    <text evidence="1">Could be responsible for synthesis of pseudouridine from uracil-55 in the psi GC loop of transfer RNAs.</text>
</comment>
<comment type="catalytic activity">
    <reaction evidence="1">
        <text>uridine(55) in tRNA = pseudouridine(55) in tRNA</text>
        <dbReference type="Rhea" id="RHEA:42532"/>
        <dbReference type="Rhea" id="RHEA-COMP:10101"/>
        <dbReference type="Rhea" id="RHEA-COMP:10102"/>
        <dbReference type="ChEBI" id="CHEBI:65314"/>
        <dbReference type="ChEBI" id="CHEBI:65315"/>
        <dbReference type="EC" id="5.4.99.25"/>
    </reaction>
</comment>
<comment type="similarity">
    <text evidence="1">Belongs to the pseudouridine synthase TruB family. Type 2 subfamily.</text>
</comment>
<feature type="chain" id="PRO_1000136823" description="Probable tRNA pseudouridine synthase B">
    <location>
        <begin position="1"/>
        <end position="325"/>
    </location>
</feature>
<feature type="domain" description="PUA" evidence="1">
    <location>
        <begin position="238"/>
        <end position="313"/>
    </location>
</feature>
<feature type="active site" description="Nucleophile" evidence="1">
    <location>
        <position position="71"/>
    </location>
</feature>
<proteinExistence type="inferred from homology"/>